<gene>
    <name evidence="1" type="primary">aroE</name>
    <name type="ordered locus">Shew185_0035</name>
</gene>
<keyword id="KW-0028">Amino-acid biosynthesis</keyword>
<keyword id="KW-0057">Aromatic amino acid biosynthesis</keyword>
<keyword id="KW-0521">NADP</keyword>
<keyword id="KW-0560">Oxidoreductase</keyword>
<evidence type="ECO:0000255" key="1">
    <source>
        <dbReference type="HAMAP-Rule" id="MF_00222"/>
    </source>
</evidence>
<dbReference type="EC" id="1.1.1.25" evidence="1"/>
<dbReference type="EMBL" id="CP000753">
    <property type="protein sequence ID" value="ABS06208.1"/>
    <property type="molecule type" value="Genomic_DNA"/>
</dbReference>
<dbReference type="RefSeq" id="WP_011982002.1">
    <property type="nucleotide sequence ID" value="NC_009665.1"/>
</dbReference>
<dbReference type="SMR" id="A6WHB9"/>
<dbReference type="KEGG" id="sbm:Shew185_0035"/>
<dbReference type="HOGENOM" id="CLU_044063_2_1_6"/>
<dbReference type="UniPathway" id="UPA00053">
    <property type="reaction ID" value="UER00087"/>
</dbReference>
<dbReference type="GO" id="GO:0005829">
    <property type="term" value="C:cytosol"/>
    <property type="evidence" value="ECO:0007669"/>
    <property type="project" value="TreeGrafter"/>
</dbReference>
<dbReference type="GO" id="GO:0050661">
    <property type="term" value="F:NADP binding"/>
    <property type="evidence" value="ECO:0007669"/>
    <property type="project" value="InterPro"/>
</dbReference>
<dbReference type="GO" id="GO:0004764">
    <property type="term" value="F:shikimate 3-dehydrogenase (NADP+) activity"/>
    <property type="evidence" value="ECO:0007669"/>
    <property type="project" value="UniProtKB-UniRule"/>
</dbReference>
<dbReference type="GO" id="GO:0008652">
    <property type="term" value="P:amino acid biosynthetic process"/>
    <property type="evidence" value="ECO:0007669"/>
    <property type="project" value="UniProtKB-KW"/>
</dbReference>
<dbReference type="GO" id="GO:0009073">
    <property type="term" value="P:aromatic amino acid family biosynthetic process"/>
    <property type="evidence" value="ECO:0007669"/>
    <property type="project" value="UniProtKB-KW"/>
</dbReference>
<dbReference type="GO" id="GO:0009423">
    <property type="term" value="P:chorismate biosynthetic process"/>
    <property type="evidence" value="ECO:0007669"/>
    <property type="project" value="UniProtKB-UniRule"/>
</dbReference>
<dbReference type="GO" id="GO:0019632">
    <property type="term" value="P:shikimate metabolic process"/>
    <property type="evidence" value="ECO:0007669"/>
    <property type="project" value="InterPro"/>
</dbReference>
<dbReference type="CDD" id="cd01065">
    <property type="entry name" value="NAD_bind_Shikimate_DH"/>
    <property type="match status" value="1"/>
</dbReference>
<dbReference type="FunFam" id="3.40.50.10860:FF:000006">
    <property type="entry name" value="Shikimate dehydrogenase (NADP(+))"/>
    <property type="match status" value="1"/>
</dbReference>
<dbReference type="FunFam" id="3.40.50.720:FF:000104">
    <property type="entry name" value="Shikimate dehydrogenase (NADP(+))"/>
    <property type="match status" value="1"/>
</dbReference>
<dbReference type="Gene3D" id="3.40.50.10860">
    <property type="entry name" value="Leucine Dehydrogenase, chain A, domain 1"/>
    <property type="match status" value="1"/>
</dbReference>
<dbReference type="Gene3D" id="3.40.50.720">
    <property type="entry name" value="NAD(P)-binding Rossmann-like Domain"/>
    <property type="match status" value="1"/>
</dbReference>
<dbReference type="HAMAP" id="MF_00222">
    <property type="entry name" value="Shikimate_DH_AroE"/>
    <property type="match status" value="1"/>
</dbReference>
<dbReference type="InterPro" id="IPR046346">
    <property type="entry name" value="Aminoacid_DH-like_N_sf"/>
</dbReference>
<dbReference type="InterPro" id="IPR036291">
    <property type="entry name" value="NAD(P)-bd_dom_sf"/>
</dbReference>
<dbReference type="InterPro" id="IPR041121">
    <property type="entry name" value="SDH_C"/>
</dbReference>
<dbReference type="InterPro" id="IPR011342">
    <property type="entry name" value="Shikimate_DH"/>
</dbReference>
<dbReference type="InterPro" id="IPR013708">
    <property type="entry name" value="Shikimate_DH-bd_N"/>
</dbReference>
<dbReference type="InterPro" id="IPR022893">
    <property type="entry name" value="Shikimate_DH_fam"/>
</dbReference>
<dbReference type="InterPro" id="IPR006151">
    <property type="entry name" value="Shikm_DH/Glu-tRNA_Rdtase"/>
</dbReference>
<dbReference type="NCBIfam" id="TIGR00507">
    <property type="entry name" value="aroE"/>
    <property type="match status" value="1"/>
</dbReference>
<dbReference type="NCBIfam" id="NF001310">
    <property type="entry name" value="PRK00258.1-2"/>
    <property type="match status" value="1"/>
</dbReference>
<dbReference type="PANTHER" id="PTHR21089:SF1">
    <property type="entry name" value="BIFUNCTIONAL 3-DEHYDROQUINATE DEHYDRATASE_SHIKIMATE DEHYDROGENASE, CHLOROPLASTIC"/>
    <property type="match status" value="1"/>
</dbReference>
<dbReference type="PANTHER" id="PTHR21089">
    <property type="entry name" value="SHIKIMATE DEHYDROGENASE"/>
    <property type="match status" value="1"/>
</dbReference>
<dbReference type="Pfam" id="PF18317">
    <property type="entry name" value="SDH_C"/>
    <property type="match status" value="1"/>
</dbReference>
<dbReference type="Pfam" id="PF01488">
    <property type="entry name" value="Shikimate_DH"/>
    <property type="match status" value="1"/>
</dbReference>
<dbReference type="Pfam" id="PF08501">
    <property type="entry name" value="Shikimate_dh_N"/>
    <property type="match status" value="1"/>
</dbReference>
<dbReference type="SUPFAM" id="SSF53223">
    <property type="entry name" value="Aminoacid dehydrogenase-like, N-terminal domain"/>
    <property type="match status" value="1"/>
</dbReference>
<dbReference type="SUPFAM" id="SSF51735">
    <property type="entry name" value="NAD(P)-binding Rossmann-fold domains"/>
    <property type="match status" value="1"/>
</dbReference>
<feature type="chain" id="PRO_0000325163" description="Shikimate dehydrogenase (NADP(+))">
    <location>
        <begin position="1"/>
        <end position="282"/>
    </location>
</feature>
<feature type="active site" description="Proton acceptor" evidence="1">
    <location>
        <position position="66"/>
    </location>
</feature>
<feature type="binding site" evidence="1">
    <location>
        <begin position="15"/>
        <end position="17"/>
    </location>
    <ligand>
        <name>shikimate</name>
        <dbReference type="ChEBI" id="CHEBI:36208"/>
    </ligand>
</feature>
<feature type="binding site" evidence="1">
    <location>
        <position position="62"/>
    </location>
    <ligand>
        <name>shikimate</name>
        <dbReference type="ChEBI" id="CHEBI:36208"/>
    </ligand>
</feature>
<feature type="binding site" evidence="1">
    <location>
        <position position="87"/>
    </location>
    <ligand>
        <name>shikimate</name>
        <dbReference type="ChEBI" id="CHEBI:36208"/>
    </ligand>
</feature>
<feature type="binding site" evidence="1">
    <location>
        <position position="103"/>
    </location>
    <ligand>
        <name>shikimate</name>
        <dbReference type="ChEBI" id="CHEBI:36208"/>
    </ligand>
</feature>
<feature type="binding site" evidence="1">
    <location>
        <begin position="127"/>
        <end position="131"/>
    </location>
    <ligand>
        <name>NADP(+)</name>
        <dbReference type="ChEBI" id="CHEBI:58349"/>
    </ligand>
</feature>
<feature type="binding site" evidence="1">
    <location>
        <begin position="151"/>
        <end position="156"/>
    </location>
    <ligand>
        <name>NADP(+)</name>
        <dbReference type="ChEBI" id="CHEBI:58349"/>
    </ligand>
</feature>
<feature type="binding site" evidence="1">
    <location>
        <position position="220"/>
    </location>
    <ligand>
        <name>NADP(+)</name>
        <dbReference type="ChEBI" id="CHEBI:58349"/>
    </ligand>
</feature>
<feature type="binding site" evidence="1">
    <location>
        <position position="222"/>
    </location>
    <ligand>
        <name>shikimate</name>
        <dbReference type="ChEBI" id="CHEBI:36208"/>
    </ligand>
</feature>
<feature type="binding site" evidence="1">
    <location>
        <position position="244"/>
    </location>
    <ligand>
        <name>NADP(+)</name>
        <dbReference type="ChEBI" id="CHEBI:58349"/>
    </ligand>
</feature>
<name>AROE_SHEB8</name>
<accession>A6WHB9</accession>
<proteinExistence type="inferred from homology"/>
<comment type="function">
    <text evidence="1">Involved in the biosynthesis of the chorismate, which leads to the biosynthesis of aromatic amino acids. Catalyzes the reversible NADPH linked reduction of 3-dehydroshikimate (DHSA) to yield shikimate (SA).</text>
</comment>
<comment type="catalytic activity">
    <reaction evidence="1">
        <text>shikimate + NADP(+) = 3-dehydroshikimate + NADPH + H(+)</text>
        <dbReference type="Rhea" id="RHEA:17737"/>
        <dbReference type="ChEBI" id="CHEBI:15378"/>
        <dbReference type="ChEBI" id="CHEBI:16630"/>
        <dbReference type="ChEBI" id="CHEBI:36208"/>
        <dbReference type="ChEBI" id="CHEBI:57783"/>
        <dbReference type="ChEBI" id="CHEBI:58349"/>
        <dbReference type="EC" id="1.1.1.25"/>
    </reaction>
</comment>
<comment type="pathway">
    <text evidence="1">Metabolic intermediate biosynthesis; chorismate biosynthesis; chorismate from D-erythrose 4-phosphate and phosphoenolpyruvate: step 4/7.</text>
</comment>
<comment type="subunit">
    <text evidence="1">Homodimer.</text>
</comment>
<comment type="similarity">
    <text evidence="1">Belongs to the shikimate dehydrogenase family.</text>
</comment>
<protein>
    <recommendedName>
        <fullName evidence="1">Shikimate dehydrogenase (NADP(+))</fullName>
        <shortName evidence="1">SDH</shortName>
        <ecNumber evidence="1">1.1.1.25</ecNumber>
    </recommendedName>
</protein>
<sequence>MTDRYAVFGNPISHSKSPFIHGQFAAPTQESLTYEAILAPVDGFEASLTAFFNAGGKGANVTVPFKEQAFALCDSISPEAKLAGAVNTLSLLADGTIRGDNTDGLGLVADLIANLGSLQDQRVLLIGAGGAARGCILPLLNAGIAQLTISNRTHTKAQLLVDIFTSVDNGAYVSKVTAVEMSELAGEFDIIINSTSASLAGELPPLPAHIITTQTVCYDMMYGASVTAFNQWALSQGAAKVIDGLGMLVGQAAKSFTLWRGIEPDTQVVLTLLRDKLMAEPK</sequence>
<reference key="1">
    <citation type="submission" date="2007-07" db="EMBL/GenBank/DDBJ databases">
        <title>Complete sequence of chromosome of Shewanella baltica OS185.</title>
        <authorList>
            <consortium name="US DOE Joint Genome Institute"/>
            <person name="Copeland A."/>
            <person name="Lucas S."/>
            <person name="Lapidus A."/>
            <person name="Barry K."/>
            <person name="Glavina del Rio T."/>
            <person name="Dalin E."/>
            <person name="Tice H."/>
            <person name="Pitluck S."/>
            <person name="Sims D."/>
            <person name="Brettin T."/>
            <person name="Bruce D."/>
            <person name="Detter J.C."/>
            <person name="Han C."/>
            <person name="Schmutz J."/>
            <person name="Larimer F."/>
            <person name="Land M."/>
            <person name="Hauser L."/>
            <person name="Kyrpides N."/>
            <person name="Mikhailova N."/>
            <person name="Brettar I."/>
            <person name="Rodrigues J."/>
            <person name="Konstantinidis K."/>
            <person name="Tiedje J."/>
            <person name="Richardson P."/>
        </authorList>
    </citation>
    <scope>NUCLEOTIDE SEQUENCE [LARGE SCALE GENOMIC DNA]</scope>
    <source>
        <strain>OS185</strain>
    </source>
</reference>
<organism>
    <name type="scientific">Shewanella baltica (strain OS185)</name>
    <dbReference type="NCBI Taxonomy" id="402882"/>
    <lineage>
        <taxon>Bacteria</taxon>
        <taxon>Pseudomonadati</taxon>
        <taxon>Pseudomonadota</taxon>
        <taxon>Gammaproteobacteria</taxon>
        <taxon>Alteromonadales</taxon>
        <taxon>Shewanellaceae</taxon>
        <taxon>Shewanella</taxon>
    </lineage>
</organism>